<feature type="chain" id="PRO_0000296971" description="UPF0342 protein NT01CX_2274">
    <location>
        <begin position="1"/>
        <end position="114"/>
    </location>
</feature>
<protein>
    <recommendedName>
        <fullName evidence="1">UPF0342 protein NT01CX_2274</fullName>
    </recommendedName>
</protein>
<organism>
    <name type="scientific">Clostridium novyi (strain NT)</name>
    <dbReference type="NCBI Taxonomy" id="386415"/>
    <lineage>
        <taxon>Bacteria</taxon>
        <taxon>Bacillati</taxon>
        <taxon>Bacillota</taxon>
        <taxon>Clostridia</taxon>
        <taxon>Eubacteriales</taxon>
        <taxon>Clostridiaceae</taxon>
        <taxon>Clostridium</taxon>
    </lineage>
</organism>
<comment type="similarity">
    <text evidence="1">Belongs to the UPF0342 family.</text>
</comment>
<name>Y2274_CLONN</name>
<evidence type="ECO:0000255" key="1">
    <source>
        <dbReference type="HAMAP-Rule" id="MF_01526"/>
    </source>
</evidence>
<proteinExistence type="inferred from homology"/>
<gene>
    <name type="ordered locus">NT01CX_2274</name>
</gene>
<sequence>MNIYDKVHELANELKECEEVKNFKKYKKAVEAKESSKKMVEDFRKVQLQAYSEQMEKGAASQETMEKLENIGKIISMDLDVSNYMQAEVKFGVLWEDIIKILGKAVDDDFVDHK</sequence>
<dbReference type="EMBL" id="CP000382">
    <property type="protein sequence ID" value="ABK62002.1"/>
    <property type="molecule type" value="Genomic_DNA"/>
</dbReference>
<dbReference type="RefSeq" id="WP_011722343.1">
    <property type="nucleotide sequence ID" value="NC_008593.1"/>
</dbReference>
<dbReference type="SMR" id="A0Q145"/>
<dbReference type="STRING" id="386415.NT01CX_2274"/>
<dbReference type="KEGG" id="cno:NT01CX_2274"/>
<dbReference type="eggNOG" id="COG3679">
    <property type="taxonomic scope" value="Bacteria"/>
</dbReference>
<dbReference type="HOGENOM" id="CLU_140243_2_0_9"/>
<dbReference type="Proteomes" id="UP000008220">
    <property type="component" value="Chromosome"/>
</dbReference>
<dbReference type="Gene3D" id="1.20.1500.10">
    <property type="entry name" value="YheA/YmcA-like"/>
    <property type="match status" value="1"/>
</dbReference>
<dbReference type="HAMAP" id="MF_01526">
    <property type="entry name" value="UPF0342"/>
    <property type="match status" value="1"/>
</dbReference>
<dbReference type="InterPro" id="IPR010368">
    <property type="entry name" value="Com_YlbF"/>
</dbReference>
<dbReference type="InterPro" id="IPR023378">
    <property type="entry name" value="YheA/YmcA-like_dom_sf"/>
</dbReference>
<dbReference type="Pfam" id="PF06133">
    <property type="entry name" value="Com_YlbF"/>
    <property type="match status" value="1"/>
</dbReference>
<dbReference type="SUPFAM" id="SSF158622">
    <property type="entry name" value="YheA/YmcA-like"/>
    <property type="match status" value="1"/>
</dbReference>
<keyword id="KW-1185">Reference proteome</keyword>
<reference key="1">
    <citation type="journal article" date="2006" name="Nat. Biotechnol.">
        <title>The genome and transcriptomes of the anti-tumor agent Clostridium novyi-NT.</title>
        <authorList>
            <person name="Bettegowda C."/>
            <person name="Huang X."/>
            <person name="Lin J."/>
            <person name="Cheong I."/>
            <person name="Kohli M."/>
            <person name="Szabo S.A."/>
            <person name="Zhang X."/>
            <person name="Diaz L.A. Jr."/>
            <person name="Velculescu V.E."/>
            <person name="Parmigiani G."/>
            <person name="Kinzler K.W."/>
            <person name="Vogelstein B."/>
            <person name="Zhou S."/>
        </authorList>
    </citation>
    <scope>NUCLEOTIDE SEQUENCE [LARGE SCALE GENOMIC DNA]</scope>
    <source>
        <strain>NT</strain>
    </source>
</reference>
<accession>A0Q145</accession>